<organism>
    <name type="scientific">Serratia proteamaculans (strain 568)</name>
    <dbReference type="NCBI Taxonomy" id="399741"/>
    <lineage>
        <taxon>Bacteria</taxon>
        <taxon>Pseudomonadati</taxon>
        <taxon>Pseudomonadota</taxon>
        <taxon>Gammaproteobacteria</taxon>
        <taxon>Enterobacterales</taxon>
        <taxon>Yersiniaceae</taxon>
        <taxon>Serratia</taxon>
    </lineage>
</organism>
<proteinExistence type="inferred from homology"/>
<keyword id="KW-0067">ATP-binding</keyword>
<keyword id="KW-0963">Cytoplasm</keyword>
<keyword id="KW-1015">Disulfide bond</keyword>
<keyword id="KW-0547">Nucleotide-binding</keyword>
<keyword id="KW-0694">RNA-binding</keyword>
<keyword id="KW-0808">Transferase</keyword>
<keyword id="KW-0819">tRNA processing</keyword>
<keyword id="KW-0820">tRNA-binding</keyword>
<gene>
    <name evidence="1" type="primary">mnmA</name>
    <name type="synonym">trmU</name>
    <name type="ordered locus">Spro_2022</name>
</gene>
<evidence type="ECO:0000255" key="1">
    <source>
        <dbReference type="HAMAP-Rule" id="MF_00144"/>
    </source>
</evidence>
<comment type="function">
    <text evidence="1">Catalyzes the 2-thiolation of uridine at the wobble position (U34) of tRNA(Lys), tRNA(Glu) and tRNA(Gln), leading to the formation of s(2)U34, the first step of tRNA-mnm(5)s(2)U34 synthesis. Sulfur is provided by IscS, via a sulfur-relay system. Binds ATP and its substrate tRNAs.</text>
</comment>
<comment type="catalytic activity">
    <reaction evidence="1">
        <text>S-sulfanyl-L-cysteinyl-[protein] + uridine(34) in tRNA + AH2 + ATP = 2-thiouridine(34) in tRNA + L-cysteinyl-[protein] + A + AMP + diphosphate + H(+)</text>
        <dbReference type="Rhea" id="RHEA:47032"/>
        <dbReference type="Rhea" id="RHEA-COMP:10131"/>
        <dbReference type="Rhea" id="RHEA-COMP:11726"/>
        <dbReference type="Rhea" id="RHEA-COMP:11727"/>
        <dbReference type="Rhea" id="RHEA-COMP:11728"/>
        <dbReference type="ChEBI" id="CHEBI:13193"/>
        <dbReference type="ChEBI" id="CHEBI:15378"/>
        <dbReference type="ChEBI" id="CHEBI:17499"/>
        <dbReference type="ChEBI" id="CHEBI:29950"/>
        <dbReference type="ChEBI" id="CHEBI:30616"/>
        <dbReference type="ChEBI" id="CHEBI:33019"/>
        <dbReference type="ChEBI" id="CHEBI:61963"/>
        <dbReference type="ChEBI" id="CHEBI:65315"/>
        <dbReference type="ChEBI" id="CHEBI:87170"/>
        <dbReference type="ChEBI" id="CHEBI:456215"/>
        <dbReference type="EC" id="2.8.1.13"/>
    </reaction>
</comment>
<comment type="subunit">
    <text evidence="1">Interacts with TusE.</text>
</comment>
<comment type="subcellular location">
    <subcellularLocation>
        <location evidence="1">Cytoplasm</location>
    </subcellularLocation>
</comment>
<comment type="similarity">
    <text evidence="1">Belongs to the MnmA/TRMU family.</text>
</comment>
<sequence>MSDNSQKKVIVGMSGGVDSSVTAYLLQQQGYQVAGLFMKNWEEDDDEEYCSAATDLADAQAVCDKLGIELHTVNFAAEYWDNVFELFLEEYKAGRTPNPDILCNKEIKFKAFLEFAAEDLGADFIATGHYVRRQDVDSKSRLLRGVDGNKDQSYFLYTLSHEQVAQSLFPVGELEKPEVRRIAEQLELVTAKKKDSTGICFIGERKFRDFLGRYLPAQPGPIVSVDGQTVGEHQGLMYHTLGQRKGLGIGGMKDSSEDPWYVVDKDVANNVLVVAQGHEHPRLMSVGLIAQQLHWVDRLPLSGPFRCTVKTRYRQQDIPCTVTPLDEQRIEVRFDEPVAAVTPGQSAVFYQDEICLGGGIIEQRLQE</sequence>
<accession>A8GDD5</accession>
<dbReference type="EC" id="2.8.1.13" evidence="1"/>
<dbReference type="EMBL" id="CP000826">
    <property type="protein sequence ID" value="ABV41125.1"/>
    <property type="molecule type" value="Genomic_DNA"/>
</dbReference>
<dbReference type="SMR" id="A8GDD5"/>
<dbReference type="STRING" id="399741.Spro_2022"/>
<dbReference type="KEGG" id="spe:Spro_2022"/>
<dbReference type="eggNOG" id="COG0482">
    <property type="taxonomic scope" value="Bacteria"/>
</dbReference>
<dbReference type="HOGENOM" id="CLU_035188_1_0_6"/>
<dbReference type="OrthoDB" id="9800696at2"/>
<dbReference type="GO" id="GO:0005737">
    <property type="term" value="C:cytoplasm"/>
    <property type="evidence" value="ECO:0007669"/>
    <property type="project" value="UniProtKB-SubCell"/>
</dbReference>
<dbReference type="GO" id="GO:0005524">
    <property type="term" value="F:ATP binding"/>
    <property type="evidence" value="ECO:0007669"/>
    <property type="project" value="UniProtKB-KW"/>
</dbReference>
<dbReference type="GO" id="GO:0000049">
    <property type="term" value="F:tRNA binding"/>
    <property type="evidence" value="ECO:0007669"/>
    <property type="project" value="UniProtKB-KW"/>
</dbReference>
<dbReference type="GO" id="GO:0103016">
    <property type="term" value="F:tRNA-uridine 2-sulfurtransferase activity"/>
    <property type="evidence" value="ECO:0007669"/>
    <property type="project" value="UniProtKB-EC"/>
</dbReference>
<dbReference type="GO" id="GO:0002143">
    <property type="term" value="P:tRNA wobble position uridine thiolation"/>
    <property type="evidence" value="ECO:0007669"/>
    <property type="project" value="TreeGrafter"/>
</dbReference>
<dbReference type="CDD" id="cd01998">
    <property type="entry name" value="MnmA_TRMU-like"/>
    <property type="match status" value="1"/>
</dbReference>
<dbReference type="FunFam" id="2.30.30.280:FF:000001">
    <property type="entry name" value="tRNA-specific 2-thiouridylase MnmA"/>
    <property type="match status" value="1"/>
</dbReference>
<dbReference type="FunFam" id="2.40.30.10:FF:000023">
    <property type="entry name" value="tRNA-specific 2-thiouridylase MnmA"/>
    <property type="match status" value="1"/>
</dbReference>
<dbReference type="FunFam" id="3.40.50.620:FF:000004">
    <property type="entry name" value="tRNA-specific 2-thiouridylase MnmA"/>
    <property type="match status" value="1"/>
</dbReference>
<dbReference type="Gene3D" id="2.30.30.280">
    <property type="entry name" value="Adenine nucleotide alpha hydrolases-like domains"/>
    <property type="match status" value="1"/>
</dbReference>
<dbReference type="Gene3D" id="3.40.50.620">
    <property type="entry name" value="HUPs"/>
    <property type="match status" value="1"/>
</dbReference>
<dbReference type="Gene3D" id="2.40.30.10">
    <property type="entry name" value="Translation factors"/>
    <property type="match status" value="1"/>
</dbReference>
<dbReference type="HAMAP" id="MF_00144">
    <property type="entry name" value="tRNA_thiouridyl_MnmA"/>
    <property type="match status" value="1"/>
</dbReference>
<dbReference type="InterPro" id="IPR004506">
    <property type="entry name" value="MnmA-like"/>
</dbReference>
<dbReference type="InterPro" id="IPR046885">
    <property type="entry name" value="MnmA-like_C"/>
</dbReference>
<dbReference type="InterPro" id="IPR046884">
    <property type="entry name" value="MnmA-like_central"/>
</dbReference>
<dbReference type="InterPro" id="IPR023382">
    <property type="entry name" value="MnmA-like_central_sf"/>
</dbReference>
<dbReference type="InterPro" id="IPR014729">
    <property type="entry name" value="Rossmann-like_a/b/a_fold"/>
</dbReference>
<dbReference type="NCBIfam" id="NF001138">
    <property type="entry name" value="PRK00143.1"/>
    <property type="match status" value="1"/>
</dbReference>
<dbReference type="NCBIfam" id="TIGR00420">
    <property type="entry name" value="trmU"/>
    <property type="match status" value="1"/>
</dbReference>
<dbReference type="PANTHER" id="PTHR11933:SF5">
    <property type="entry name" value="MITOCHONDRIAL TRNA-SPECIFIC 2-THIOURIDYLASE 1"/>
    <property type="match status" value="1"/>
</dbReference>
<dbReference type="PANTHER" id="PTHR11933">
    <property type="entry name" value="TRNA 5-METHYLAMINOMETHYL-2-THIOURIDYLATE -METHYLTRANSFERASE"/>
    <property type="match status" value="1"/>
</dbReference>
<dbReference type="Pfam" id="PF03054">
    <property type="entry name" value="tRNA_Me_trans"/>
    <property type="match status" value="1"/>
</dbReference>
<dbReference type="Pfam" id="PF20258">
    <property type="entry name" value="tRNA_Me_trans_C"/>
    <property type="match status" value="1"/>
</dbReference>
<dbReference type="Pfam" id="PF20259">
    <property type="entry name" value="tRNA_Me_trans_M"/>
    <property type="match status" value="1"/>
</dbReference>
<dbReference type="SUPFAM" id="SSF52402">
    <property type="entry name" value="Adenine nucleotide alpha hydrolases-like"/>
    <property type="match status" value="1"/>
</dbReference>
<name>MNMA_SERP5</name>
<feature type="chain" id="PRO_1000057948" description="tRNA-specific 2-thiouridylase MnmA">
    <location>
        <begin position="1"/>
        <end position="367"/>
    </location>
</feature>
<feature type="region of interest" description="Interaction with target base in tRNA" evidence="1">
    <location>
        <begin position="98"/>
        <end position="100"/>
    </location>
</feature>
<feature type="region of interest" description="Interaction with tRNA" evidence="1">
    <location>
        <begin position="150"/>
        <end position="152"/>
    </location>
</feature>
<feature type="region of interest" description="Interaction with tRNA" evidence="1">
    <location>
        <begin position="312"/>
        <end position="313"/>
    </location>
</feature>
<feature type="active site" description="Nucleophile" evidence="1">
    <location>
        <position position="103"/>
    </location>
</feature>
<feature type="active site" description="Cysteine persulfide intermediate" evidence="1">
    <location>
        <position position="200"/>
    </location>
</feature>
<feature type="binding site" evidence="1">
    <location>
        <begin position="12"/>
        <end position="19"/>
    </location>
    <ligand>
        <name>ATP</name>
        <dbReference type="ChEBI" id="CHEBI:30616"/>
    </ligand>
</feature>
<feature type="binding site" evidence="1">
    <location>
        <position position="38"/>
    </location>
    <ligand>
        <name>ATP</name>
        <dbReference type="ChEBI" id="CHEBI:30616"/>
    </ligand>
</feature>
<feature type="binding site" evidence="1">
    <location>
        <position position="128"/>
    </location>
    <ligand>
        <name>ATP</name>
        <dbReference type="ChEBI" id="CHEBI:30616"/>
    </ligand>
</feature>
<feature type="site" description="Interaction with tRNA" evidence="1">
    <location>
        <position position="129"/>
    </location>
</feature>
<feature type="site" description="Interaction with tRNA" evidence="1">
    <location>
        <position position="345"/>
    </location>
</feature>
<feature type="disulfide bond" description="Alternate" evidence="1">
    <location>
        <begin position="103"/>
        <end position="200"/>
    </location>
</feature>
<protein>
    <recommendedName>
        <fullName evidence="1">tRNA-specific 2-thiouridylase MnmA</fullName>
        <ecNumber evidence="1">2.8.1.13</ecNumber>
    </recommendedName>
</protein>
<reference key="1">
    <citation type="submission" date="2007-09" db="EMBL/GenBank/DDBJ databases">
        <title>Complete sequence of chromosome of Serratia proteamaculans 568.</title>
        <authorList>
            <consortium name="US DOE Joint Genome Institute"/>
            <person name="Copeland A."/>
            <person name="Lucas S."/>
            <person name="Lapidus A."/>
            <person name="Barry K."/>
            <person name="Glavina del Rio T."/>
            <person name="Dalin E."/>
            <person name="Tice H."/>
            <person name="Pitluck S."/>
            <person name="Chain P."/>
            <person name="Malfatti S."/>
            <person name="Shin M."/>
            <person name="Vergez L."/>
            <person name="Schmutz J."/>
            <person name="Larimer F."/>
            <person name="Land M."/>
            <person name="Hauser L."/>
            <person name="Kyrpides N."/>
            <person name="Kim E."/>
            <person name="Taghavi S."/>
            <person name="Newman L."/>
            <person name="Vangronsveld J."/>
            <person name="van der Lelie D."/>
            <person name="Richardson P."/>
        </authorList>
    </citation>
    <scope>NUCLEOTIDE SEQUENCE [LARGE SCALE GENOMIC DNA]</scope>
    <source>
        <strain>568</strain>
    </source>
</reference>